<dbReference type="EC" id="4.98.1.1" evidence="1"/>
<dbReference type="EMBL" id="CP000247">
    <property type="protein sequence ID" value="ABG68565.1"/>
    <property type="molecule type" value="Genomic_DNA"/>
</dbReference>
<dbReference type="RefSeq" id="WP_001250114.1">
    <property type="nucleotide sequence ID" value="NC_008253.1"/>
</dbReference>
<dbReference type="SMR" id="Q0TKG6"/>
<dbReference type="KEGG" id="ecp:ECP_0536"/>
<dbReference type="HOGENOM" id="CLU_018884_0_0_6"/>
<dbReference type="UniPathway" id="UPA00252">
    <property type="reaction ID" value="UER00325"/>
</dbReference>
<dbReference type="Proteomes" id="UP000009182">
    <property type="component" value="Chromosome"/>
</dbReference>
<dbReference type="GO" id="GO:0005737">
    <property type="term" value="C:cytoplasm"/>
    <property type="evidence" value="ECO:0007669"/>
    <property type="project" value="UniProtKB-SubCell"/>
</dbReference>
<dbReference type="GO" id="GO:0004325">
    <property type="term" value="F:ferrochelatase activity"/>
    <property type="evidence" value="ECO:0007669"/>
    <property type="project" value="UniProtKB-UniRule"/>
</dbReference>
<dbReference type="GO" id="GO:0046872">
    <property type="term" value="F:metal ion binding"/>
    <property type="evidence" value="ECO:0007669"/>
    <property type="project" value="UniProtKB-KW"/>
</dbReference>
<dbReference type="GO" id="GO:0006783">
    <property type="term" value="P:heme biosynthetic process"/>
    <property type="evidence" value="ECO:0007669"/>
    <property type="project" value="UniProtKB-UniRule"/>
</dbReference>
<dbReference type="CDD" id="cd00419">
    <property type="entry name" value="Ferrochelatase_C"/>
    <property type="match status" value="1"/>
</dbReference>
<dbReference type="CDD" id="cd03411">
    <property type="entry name" value="Ferrochelatase_N"/>
    <property type="match status" value="1"/>
</dbReference>
<dbReference type="FunFam" id="3.40.50.1400:FF:000004">
    <property type="entry name" value="Ferrochelatase"/>
    <property type="match status" value="1"/>
</dbReference>
<dbReference type="Gene3D" id="3.40.50.1400">
    <property type="match status" value="2"/>
</dbReference>
<dbReference type="HAMAP" id="MF_00323">
    <property type="entry name" value="Ferrochelatase"/>
    <property type="match status" value="1"/>
</dbReference>
<dbReference type="InterPro" id="IPR001015">
    <property type="entry name" value="Ferrochelatase"/>
</dbReference>
<dbReference type="InterPro" id="IPR019772">
    <property type="entry name" value="Ferrochelatase_AS"/>
</dbReference>
<dbReference type="InterPro" id="IPR033644">
    <property type="entry name" value="Ferrochelatase_C"/>
</dbReference>
<dbReference type="InterPro" id="IPR033659">
    <property type="entry name" value="Ferrochelatase_N"/>
</dbReference>
<dbReference type="NCBIfam" id="TIGR00109">
    <property type="entry name" value="hemH"/>
    <property type="match status" value="1"/>
</dbReference>
<dbReference type="PANTHER" id="PTHR11108">
    <property type="entry name" value="FERROCHELATASE"/>
    <property type="match status" value="1"/>
</dbReference>
<dbReference type="PANTHER" id="PTHR11108:SF1">
    <property type="entry name" value="FERROCHELATASE, MITOCHONDRIAL"/>
    <property type="match status" value="1"/>
</dbReference>
<dbReference type="Pfam" id="PF00762">
    <property type="entry name" value="Ferrochelatase"/>
    <property type="match status" value="1"/>
</dbReference>
<dbReference type="SUPFAM" id="SSF53800">
    <property type="entry name" value="Chelatase"/>
    <property type="match status" value="1"/>
</dbReference>
<dbReference type="PROSITE" id="PS00534">
    <property type="entry name" value="FERROCHELATASE"/>
    <property type="match status" value="1"/>
</dbReference>
<sequence length="320" mass="35942">MRQTKTGILLANLGTPDAPTPEAVKRYLKQFLSDRRVVDTSRLLWWPLLRGVILPLRSPRVAKLYASVWMEGGSPLMVYSRQQQQALAQRLPETPVALGMSYGSPSLESAVDELLAEHVDHIVVLPLYPQYSCSTVGAVWDELARILARKRSIPGISFIRDYADNHDYINALANSVRASFAKHGEPDLLLLSYHGIPQRYADEGDDYPQRCRTTTRELASALEMAPEKVMMTFQSRFGREPWLMPYTDETLKMLGEKGVGHIQVMCPGFAADCLETLEEIAEQNREVFLGAGGKKYEYIPALNATPEHIEMMANLVAAYR</sequence>
<proteinExistence type="inferred from homology"/>
<keyword id="KW-0963">Cytoplasm</keyword>
<keyword id="KW-0350">Heme biosynthesis</keyword>
<keyword id="KW-0408">Iron</keyword>
<keyword id="KW-0456">Lyase</keyword>
<keyword id="KW-0479">Metal-binding</keyword>
<keyword id="KW-0627">Porphyrin biosynthesis</keyword>
<gene>
    <name evidence="1" type="primary">hemH</name>
    <name type="ordered locus">ECP_0536</name>
</gene>
<comment type="function">
    <text evidence="1">Catalyzes the ferrous insertion into protoporphyrin IX.</text>
</comment>
<comment type="catalytic activity">
    <reaction evidence="1">
        <text>heme b + 2 H(+) = protoporphyrin IX + Fe(2+)</text>
        <dbReference type="Rhea" id="RHEA:22584"/>
        <dbReference type="ChEBI" id="CHEBI:15378"/>
        <dbReference type="ChEBI" id="CHEBI:29033"/>
        <dbReference type="ChEBI" id="CHEBI:57306"/>
        <dbReference type="ChEBI" id="CHEBI:60344"/>
        <dbReference type="EC" id="4.98.1.1"/>
    </reaction>
</comment>
<comment type="pathway">
    <text evidence="1">Porphyrin-containing compound metabolism; protoheme biosynthesis; protoheme from protoporphyrin-IX: step 1/1.</text>
</comment>
<comment type="subunit">
    <text evidence="1">Monomer.</text>
</comment>
<comment type="subcellular location">
    <subcellularLocation>
        <location evidence="1">Cytoplasm</location>
    </subcellularLocation>
</comment>
<comment type="similarity">
    <text evidence="1">Belongs to the ferrochelatase family.</text>
</comment>
<organism>
    <name type="scientific">Escherichia coli O6:K15:H31 (strain 536 / UPEC)</name>
    <dbReference type="NCBI Taxonomy" id="362663"/>
    <lineage>
        <taxon>Bacteria</taxon>
        <taxon>Pseudomonadati</taxon>
        <taxon>Pseudomonadota</taxon>
        <taxon>Gammaproteobacteria</taxon>
        <taxon>Enterobacterales</taxon>
        <taxon>Enterobacteriaceae</taxon>
        <taxon>Escherichia</taxon>
    </lineage>
</organism>
<name>HEMH_ECOL5</name>
<evidence type="ECO:0000255" key="1">
    <source>
        <dbReference type="HAMAP-Rule" id="MF_00323"/>
    </source>
</evidence>
<accession>Q0TKG6</accession>
<feature type="chain" id="PRO_1000019295" description="Ferrochelatase">
    <location>
        <begin position="1"/>
        <end position="320"/>
    </location>
</feature>
<feature type="binding site" evidence="1">
    <location>
        <position position="194"/>
    </location>
    <ligand>
        <name>Fe cation</name>
        <dbReference type="ChEBI" id="CHEBI:24875"/>
    </ligand>
</feature>
<feature type="binding site" evidence="1">
    <location>
        <position position="275"/>
    </location>
    <ligand>
        <name>Fe cation</name>
        <dbReference type="ChEBI" id="CHEBI:24875"/>
    </ligand>
</feature>
<reference key="1">
    <citation type="journal article" date="2006" name="Mol. Microbiol.">
        <title>Role of pathogenicity island-associated integrases in the genome plasticity of uropathogenic Escherichia coli strain 536.</title>
        <authorList>
            <person name="Hochhut B."/>
            <person name="Wilde C."/>
            <person name="Balling G."/>
            <person name="Middendorf B."/>
            <person name="Dobrindt U."/>
            <person name="Brzuszkiewicz E."/>
            <person name="Gottschalk G."/>
            <person name="Carniel E."/>
            <person name="Hacker J."/>
        </authorList>
    </citation>
    <scope>NUCLEOTIDE SEQUENCE [LARGE SCALE GENOMIC DNA]</scope>
    <source>
        <strain>536 / UPEC</strain>
    </source>
</reference>
<protein>
    <recommendedName>
        <fullName evidence="1">Ferrochelatase</fullName>
        <ecNumber evidence="1">4.98.1.1</ecNumber>
    </recommendedName>
    <alternativeName>
        <fullName evidence="1">Heme synthase</fullName>
    </alternativeName>
    <alternativeName>
        <fullName evidence="1">Protoheme ferro-lyase</fullName>
    </alternativeName>
</protein>